<accession>Q9SM44</accession>
<reference key="1">
    <citation type="journal article" date="1999" name="Eur. J. Biochem.">
        <title>Biochemical and topological properties of type A MGDG synthase, a spinach chloroplast envelope enzyme catalyzing the synthesis of both prokaryotic and eukaryotic MGDG.</title>
        <authorList>
            <person name="Miege C."/>
            <person name="Marechal E."/>
            <person name="Shimojima M."/>
            <person name="Awai K."/>
            <person name="Block M.A."/>
            <person name="Ohta H."/>
            <person name="Takamiya K."/>
            <person name="Douce R."/>
            <person name="Joyard J."/>
        </authorList>
    </citation>
    <scope>NUCLEOTIDE SEQUENCE [MRNA]</scope>
    <scope>FUNCTION</scope>
    <scope>ACTIVITY REGULATION</scope>
    <scope>SUBCELLULAR LOCATION</scope>
    <scope>SUBUNIT</scope>
</reference>
<reference key="2">
    <citation type="journal article" date="1994" name="J. Biol. Chem.">
        <title>Kinetic properties of monogalactosyldiacylglycerol synthase from spinach chloroplast envelope membranes.</title>
        <authorList>
            <person name="Marechal E."/>
            <person name="Block M.A."/>
            <person name="Joyard J."/>
            <person name="Douce R."/>
        </authorList>
    </citation>
    <scope>CHARACTERIZATION</scope>
</reference>
<reference key="3">
    <citation type="journal article" date="1995" name="J. Biol. Chem.">
        <title>The catalytic site of monogalactosyldiacylglycerol synthase from spinach chloroplast envelope membranes. Biochemical analysis of the structure and of the metal content.</title>
        <authorList>
            <person name="Marechal E."/>
            <person name="Miege C."/>
            <person name="Block M.A."/>
            <person name="Douce R."/>
            <person name="Joyard J."/>
        </authorList>
    </citation>
    <scope>CHARACTERIZATION</scope>
    <scope>ACTIVITY REGULATION</scope>
</reference>
<reference key="4">
    <citation type="journal article" date="2005" name="J. Biol. Chem.">
        <title>Molecular modeling and site-directed mutagenesis of plant chloroplast monogalactosyldiacylglycerol synthase reveal critical residues for activity.</title>
        <authorList>
            <person name="Botte C."/>
            <person name="Jeanneau C."/>
            <person name="Snajdrova L."/>
            <person name="Bastien O."/>
            <person name="Imberty A."/>
            <person name="Breton C."/>
            <person name="Marechal E."/>
        </authorList>
    </citation>
    <scope>BIOPHYSICOCHEMICAL PROPERTIES</scope>
    <scope>3D-STRUCTURE MODELING</scope>
    <scope>MUTAGENESIS OF TRP-171; GLU-173; TRP-177; HIS-240; HIS-245; CYS-284; CYS-286; 343-GLY--GLY-347; GLU-346; CYS-378; ARG-380; PHE-402; CYS-415; LYS-419; GLU-427; GLU-445 AND ASN-448</scope>
</reference>
<organism>
    <name type="scientific">Spinacia oleracea</name>
    <name type="common">Spinach</name>
    <dbReference type="NCBI Taxonomy" id="3562"/>
    <lineage>
        <taxon>Eukaryota</taxon>
        <taxon>Viridiplantae</taxon>
        <taxon>Streptophyta</taxon>
        <taxon>Embryophyta</taxon>
        <taxon>Tracheophyta</taxon>
        <taxon>Spermatophyta</taxon>
        <taxon>Magnoliopsida</taxon>
        <taxon>eudicotyledons</taxon>
        <taxon>Gunneridae</taxon>
        <taxon>Pentapetalae</taxon>
        <taxon>Caryophyllales</taxon>
        <taxon>Chenopodiaceae</taxon>
        <taxon>Chenopodioideae</taxon>
        <taxon>Anserineae</taxon>
        <taxon>Spinacia</taxon>
    </lineage>
</organism>
<evidence type="ECO:0000255" key="1"/>
<evidence type="ECO:0000269" key="2">
    <source>
    </source>
</evidence>
<evidence type="ECO:0000269" key="3">
    <source>
    </source>
</evidence>
<evidence type="ECO:0000269" key="4">
    <source>
    </source>
</evidence>
<evidence type="ECO:0000305" key="5"/>
<dbReference type="EC" id="2.4.1.46"/>
<dbReference type="EMBL" id="AJ249607">
    <property type="protein sequence ID" value="CAB56218.1"/>
    <property type="molecule type" value="mRNA"/>
</dbReference>
<dbReference type="SMR" id="Q9SM44"/>
<dbReference type="CAZy" id="GT28">
    <property type="family name" value="Glycosyltransferase Family 28"/>
</dbReference>
<dbReference type="KEGG" id="ag:CAB56218"/>
<dbReference type="OrthoDB" id="200404at2759"/>
<dbReference type="BRENDA" id="2.4.1.46">
    <property type="organism ID" value="5812"/>
</dbReference>
<dbReference type="SABIO-RK" id="Q9SM44"/>
<dbReference type="Proteomes" id="UP001155700">
    <property type="component" value="Unplaced"/>
</dbReference>
<dbReference type="GO" id="GO:0009706">
    <property type="term" value="C:chloroplast inner membrane"/>
    <property type="evidence" value="ECO:0007669"/>
    <property type="project" value="UniProtKB-SubCell"/>
</dbReference>
<dbReference type="GO" id="GO:0046509">
    <property type="term" value="F:1,2-diacylglycerol 3-beta-galactosyltransferase activity"/>
    <property type="evidence" value="ECO:0007669"/>
    <property type="project" value="UniProtKB-EC"/>
</dbReference>
<dbReference type="GO" id="GO:0009247">
    <property type="term" value="P:glycolipid biosynthetic process"/>
    <property type="evidence" value="ECO:0007669"/>
    <property type="project" value="InterPro"/>
</dbReference>
<dbReference type="CDD" id="cd17507">
    <property type="entry name" value="GT28_Beta-DGS-like"/>
    <property type="match status" value="1"/>
</dbReference>
<dbReference type="Gene3D" id="3.40.50.2000">
    <property type="entry name" value="Glycogen Phosphorylase B"/>
    <property type="match status" value="1"/>
</dbReference>
<dbReference type="InterPro" id="IPR009695">
    <property type="entry name" value="Diacylglyc_glucosyltr_N"/>
</dbReference>
<dbReference type="InterPro" id="IPR007235">
    <property type="entry name" value="Glyco_trans_28_C"/>
</dbReference>
<dbReference type="InterPro" id="IPR050519">
    <property type="entry name" value="Glycosyltransf_28_UgtP"/>
</dbReference>
<dbReference type="PANTHER" id="PTHR43025">
    <property type="entry name" value="MONOGALACTOSYLDIACYLGLYCEROL SYNTHASE"/>
    <property type="match status" value="1"/>
</dbReference>
<dbReference type="PANTHER" id="PTHR43025:SF3">
    <property type="entry name" value="MONOGALACTOSYLDIACYLGLYCEROL SYNTHASE 1, CHLOROPLASTIC"/>
    <property type="match status" value="1"/>
</dbReference>
<dbReference type="Pfam" id="PF04101">
    <property type="entry name" value="Glyco_tran_28_C"/>
    <property type="match status" value="1"/>
</dbReference>
<dbReference type="Pfam" id="PF06925">
    <property type="entry name" value="MGDG_synth"/>
    <property type="match status" value="1"/>
</dbReference>
<dbReference type="SUPFAM" id="SSF53756">
    <property type="entry name" value="UDP-Glycosyltransferase/glycogen phosphorylase"/>
    <property type="match status" value="1"/>
</dbReference>
<sequence length="522" mass="57511">MSHPSTVTSEPSNLLDFVPKLGNFVLNSSLHGNNSNGYSSFSSNSVHFGGLATQNRYKFVNSLSFSKEGSNLKRILSDFNRVIRLHCDRIPLGFSSIGLNSGESNGVSDNGHGVLEDVRVPVNAVEPESPKRVLILMSDTGGGHRASAEAIKAAFNEEFGDDYQVFVTDLWSEHTPWPFNQLPRSYNFLVKHGPLWKMMYYGTSPRVIHQSNFAATSVFIAREVARGLMKYQPDIIISVHPLMQHVPLRILRGRGLLEKIVFTTVVTDLSTCHPTWFHKLVTRCYCPSNEVAKRATKAGLQPSQIKVYGLPVRPSFVRSVRPKNELRKELGMDEHLPAVLLMGGGEGMGPIEATARALGNALYDANLGEPTGQLLVICGRNKKLAGKLSSIDWKIPVQVKGFVTKIEECMGACDCIITKAGPGTIAEAMIRGLPIILNDYIAGQEAGNVPYVIENGIGKYLKSPKEIAKTVSQWFGPKANELQIMSQNALKHARPDAVFKIVHDLDELVRQKIFVRQYSCAA</sequence>
<name>MGDG_SPIOL</name>
<comment type="function">
    <text evidence="2">Involved in the synthesis of the major structural component of photosynthetic membranes. The 1,2-diacylglycerol substrate preference is 18:2/18:2 &gt; 18:0/18:1 &gt; 18:1/18:1 &gt; 18:1/16:0 &gt; 16:0/18:2 &gt; 18:3/18:3 &gt; 16:0/18:1 &gt; 16:0/16:0 &gt; 18:0/18:0.</text>
</comment>
<comment type="catalytic activity">
    <reaction>
        <text>a 1,2-diacyl-sn-glycerol + UDP-alpha-D-galactose = a 1,2-diacyl-3-O-(beta-D-galactosyl)-sn-glycerol + UDP + H(+)</text>
        <dbReference type="Rhea" id="RHEA:14945"/>
        <dbReference type="ChEBI" id="CHEBI:15378"/>
        <dbReference type="ChEBI" id="CHEBI:17615"/>
        <dbReference type="ChEBI" id="CHEBI:17815"/>
        <dbReference type="ChEBI" id="CHEBI:58223"/>
        <dbReference type="ChEBI" id="CHEBI:66914"/>
        <dbReference type="EC" id="2.4.1.46"/>
    </reaction>
</comment>
<comment type="cofactor">
    <cofactor evidence="5">
        <name>Zn(2+)</name>
        <dbReference type="ChEBI" id="CHEBI:29105"/>
    </cofactor>
</comment>
<comment type="activity regulation">
    <text evidence="2 4">Inhibited by ortho-phenanthroline and UDP (competitive inhibitor relatively to UDP-Gal only) and inactivated by citraconic anhydride, tert-butoxycarbonyl-L-methionine hydrosuccinimidyl ester (SLR) and N-ethylmaleimide (NEM).</text>
</comment>
<comment type="biophysicochemical properties">
    <kinetics>
        <KM evidence="3">0.65 mM for UDP-Gal</KM>
    </kinetics>
</comment>
<comment type="subunit">
    <text evidence="5">Homodimer.</text>
</comment>
<comment type="subcellular location">
    <subcellularLocation>
        <location evidence="2">Plastid</location>
        <location evidence="2">Chloroplast inner membrane</location>
    </subcellularLocation>
</comment>
<comment type="domain">
    <text>The C-terminal domain (308-483) is involved in UDP-Gal binding while the N-terminal domains (131-307) is involved in dyacylglycerol binding.</text>
</comment>
<comment type="similarity">
    <text evidence="5">Belongs to the glycosyltransferase 28 family.</text>
</comment>
<protein>
    <recommendedName>
        <fullName>Monogalactosyldiacylglycerol synthase, chloroplastic</fullName>
        <shortName>SoMGD1</shortName>
        <ecNumber>2.4.1.46</ecNumber>
    </recommendedName>
    <alternativeName>
        <fullName>MGDG synthase type A</fullName>
    </alternativeName>
</protein>
<keyword id="KW-0150">Chloroplast</keyword>
<keyword id="KW-0328">Glycosyltransferase</keyword>
<keyword id="KW-0472">Membrane</keyword>
<keyword id="KW-0934">Plastid</keyword>
<keyword id="KW-1001">Plastid inner membrane</keyword>
<keyword id="KW-1185">Reference proteome</keyword>
<keyword id="KW-0808">Transferase</keyword>
<keyword id="KW-0809">Transit peptide</keyword>
<feature type="transit peptide" description="Chloroplast" evidence="1">
    <location>
        <begin position="1"/>
        <end position="98"/>
    </location>
</feature>
<feature type="chain" id="PRO_5000065674" description="Monogalactosyldiacylglycerol synthase, chloroplastic">
    <location>
        <begin position="99"/>
        <end position="522"/>
    </location>
</feature>
<feature type="site" description="Substrate specificity for galactose">
    <location>
        <position position="422"/>
    </location>
</feature>
<feature type="mutagenesis site" description="90% reduction of activity." evidence="3">
    <original>W</original>
    <variation>A</variation>
    <location>
        <position position="171"/>
    </location>
</feature>
<feature type="mutagenesis site" description="90% reduction of activity." evidence="3">
    <original>E</original>
    <variation>N</variation>
    <location>
        <position position="173"/>
    </location>
</feature>
<feature type="mutagenesis site" description="90% reduction of activity." evidence="3">
    <original>W</original>
    <variation>A</variation>
    <location>
        <position position="177"/>
    </location>
</feature>
<feature type="mutagenesis site" description="Total loss of activity." evidence="3">
    <original>H</original>
    <variation>A</variation>
    <location>
        <position position="240"/>
    </location>
</feature>
<feature type="mutagenesis site" description="90% reduction of activity." evidence="3">
    <original>H</original>
    <variation>A</variation>
    <location>
        <position position="245"/>
    </location>
</feature>
<feature type="mutagenesis site" description="No effect." evidence="3">
    <original>C</original>
    <variation>A</variation>
    <location>
        <position position="284"/>
    </location>
</feature>
<feature type="mutagenesis site" description="No effect." evidence="3">
    <original>C</original>
    <variation>A</variation>
    <location>
        <position position="286"/>
    </location>
</feature>
<feature type="mutagenesis site" description="Total loss of activity." evidence="3">
    <location>
        <begin position="343"/>
        <end position="347"/>
    </location>
</feature>
<feature type="mutagenesis site" description="90% reduction of activity." evidence="3">
    <original>E</original>
    <variation>A</variation>
    <location>
        <position position="346"/>
    </location>
</feature>
<feature type="mutagenesis site" description="25% reduction of activity." evidence="3">
    <original>C</original>
    <variation>A</variation>
    <location>
        <position position="378"/>
    </location>
</feature>
<feature type="mutagenesis site" description="90% reduction of activity." evidence="3">
    <original>R</original>
    <variation>E</variation>
    <location>
        <position position="380"/>
    </location>
</feature>
<feature type="mutagenesis site" description="90% reduction of activity." evidence="3">
    <original>F</original>
    <variation>A</variation>
    <location>
        <position position="402"/>
    </location>
</feature>
<feature type="mutagenesis site" description="No effect." evidence="3">
    <original>C</original>
    <variation>A</variation>
    <location>
        <position position="415"/>
    </location>
</feature>
<feature type="mutagenesis site" description="Total loss of activity." evidence="3">
    <original>K</original>
    <variation>A</variation>
    <location>
        <position position="419"/>
    </location>
</feature>
<feature type="mutagenesis site" description="Total loss of activity." evidence="3">
    <original>E</original>
    <variation>A</variation>
    <location>
        <position position="427"/>
    </location>
</feature>
<feature type="mutagenesis site" description="Total loss of activity." evidence="3">
    <original>E</original>
    <variation>A</variation>
    <location>
        <position position="445"/>
    </location>
</feature>
<feature type="mutagenesis site" description="90% reduction of activity." evidence="3">
    <original>N</original>
    <variation>A</variation>
    <location>
        <position position="448"/>
    </location>
</feature>
<proteinExistence type="evidence at protein level"/>
<gene>
    <name type="primary">MGD A</name>
</gene>